<organism>
    <name type="scientific">Escherichia coli (strain K12 / DH10B)</name>
    <dbReference type="NCBI Taxonomy" id="316385"/>
    <lineage>
        <taxon>Bacteria</taxon>
        <taxon>Pseudomonadati</taxon>
        <taxon>Pseudomonadota</taxon>
        <taxon>Gammaproteobacteria</taxon>
        <taxon>Enterobacterales</taxon>
        <taxon>Enterobacteriaceae</taxon>
        <taxon>Escherichia</taxon>
    </lineage>
</organism>
<accession>B1X969</accession>
<dbReference type="EC" id="3.2.2.23" evidence="2"/>
<dbReference type="EC" id="4.2.99.18" evidence="2"/>
<dbReference type="EMBL" id="CP000948">
    <property type="protein sequence ID" value="ACB04685.1"/>
    <property type="molecule type" value="Genomic_DNA"/>
</dbReference>
<dbReference type="RefSeq" id="WP_001114543.1">
    <property type="nucleotide sequence ID" value="NC_010473.1"/>
</dbReference>
<dbReference type="SMR" id="B1X969"/>
<dbReference type="GeneID" id="75202204"/>
<dbReference type="KEGG" id="ecd:ECDH10B_3817"/>
<dbReference type="HOGENOM" id="CLU_038423_1_1_6"/>
<dbReference type="GO" id="GO:0034039">
    <property type="term" value="F:8-oxo-7,8-dihydroguanine DNA N-glycosylase activity"/>
    <property type="evidence" value="ECO:0007669"/>
    <property type="project" value="TreeGrafter"/>
</dbReference>
<dbReference type="GO" id="GO:0140078">
    <property type="term" value="F:class I DNA-(apurinic or apyrimidinic site) endonuclease activity"/>
    <property type="evidence" value="ECO:0007669"/>
    <property type="project" value="UniProtKB-EC"/>
</dbReference>
<dbReference type="GO" id="GO:0003684">
    <property type="term" value="F:damaged DNA binding"/>
    <property type="evidence" value="ECO:0007669"/>
    <property type="project" value="InterPro"/>
</dbReference>
<dbReference type="GO" id="GO:0008270">
    <property type="term" value="F:zinc ion binding"/>
    <property type="evidence" value="ECO:0007669"/>
    <property type="project" value="UniProtKB-UniRule"/>
</dbReference>
<dbReference type="GO" id="GO:0006284">
    <property type="term" value="P:base-excision repair"/>
    <property type="evidence" value="ECO:0007669"/>
    <property type="project" value="InterPro"/>
</dbReference>
<dbReference type="CDD" id="cd08966">
    <property type="entry name" value="EcFpg-like_N"/>
    <property type="match status" value="1"/>
</dbReference>
<dbReference type="FunFam" id="1.10.8.50:FF:000003">
    <property type="entry name" value="Formamidopyrimidine-DNA glycosylase"/>
    <property type="match status" value="1"/>
</dbReference>
<dbReference type="FunFam" id="3.20.190.10:FF:000001">
    <property type="entry name" value="Formamidopyrimidine-DNA glycosylase"/>
    <property type="match status" value="1"/>
</dbReference>
<dbReference type="Gene3D" id="1.10.8.50">
    <property type="match status" value="1"/>
</dbReference>
<dbReference type="Gene3D" id="3.20.190.10">
    <property type="entry name" value="MutM-like, N-terminal"/>
    <property type="match status" value="1"/>
</dbReference>
<dbReference type="HAMAP" id="MF_00103">
    <property type="entry name" value="Fapy_DNA_glycosyl"/>
    <property type="match status" value="1"/>
</dbReference>
<dbReference type="InterPro" id="IPR015886">
    <property type="entry name" value="DNA_glyclase/AP_lyase_DNA-bd"/>
</dbReference>
<dbReference type="InterPro" id="IPR015887">
    <property type="entry name" value="DNA_glyclase_Znf_dom_DNA_BS"/>
</dbReference>
<dbReference type="InterPro" id="IPR020629">
    <property type="entry name" value="Formamido-pyr_DNA_Glyclase"/>
</dbReference>
<dbReference type="InterPro" id="IPR012319">
    <property type="entry name" value="FPG_cat"/>
</dbReference>
<dbReference type="InterPro" id="IPR035937">
    <property type="entry name" value="MutM-like_N-ter"/>
</dbReference>
<dbReference type="InterPro" id="IPR010979">
    <property type="entry name" value="Ribosomal_uS13-like_H2TH"/>
</dbReference>
<dbReference type="InterPro" id="IPR000214">
    <property type="entry name" value="Znf_DNA_glyclase/AP_lyase"/>
</dbReference>
<dbReference type="InterPro" id="IPR010663">
    <property type="entry name" value="Znf_FPG/IleRS"/>
</dbReference>
<dbReference type="NCBIfam" id="TIGR00577">
    <property type="entry name" value="fpg"/>
    <property type="match status" value="1"/>
</dbReference>
<dbReference type="NCBIfam" id="NF002211">
    <property type="entry name" value="PRK01103.1"/>
    <property type="match status" value="1"/>
</dbReference>
<dbReference type="PANTHER" id="PTHR22993">
    <property type="entry name" value="FORMAMIDOPYRIMIDINE-DNA GLYCOSYLASE"/>
    <property type="match status" value="1"/>
</dbReference>
<dbReference type="PANTHER" id="PTHR22993:SF9">
    <property type="entry name" value="FORMAMIDOPYRIMIDINE-DNA GLYCOSYLASE"/>
    <property type="match status" value="1"/>
</dbReference>
<dbReference type="Pfam" id="PF01149">
    <property type="entry name" value="Fapy_DNA_glyco"/>
    <property type="match status" value="1"/>
</dbReference>
<dbReference type="Pfam" id="PF06831">
    <property type="entry name" value="H2TH"/>
    <property type="match status" value="1"/>
</dbReference>
<dbReference type="Pfam" id="PF06827">
    <property type="entry name" value="zf-FPG_IleRS"/>
    <property type="match status" value="1"/>
</dbReference>
<dbReference type="SMART" id="SM00898">
    <property type="entry name" value="Fapy_DNA_glyco"/>
    <property type="match status" value="1"/>
</dbReference>
<dbReference type="SMART" id="SM01232">
    <property type="entry name" value="H2TH"/>
    <property type="match status" value="1"/>
</dbReference>
<dbReference type="SUPFAM" id="SSF57716">
    <property type="entry name" value="Glucocorticoid receptor-like (DNA-binding domain)"/>
    <property type="match status" value="1"/>
</dbReference>
<dbReference type="SUPFAM" id="SSF81624">
    <property type="entry name" value="N-terminal domain of MutM-like DNA repair proteins"/>
    <property type="match status" value="1"/>
</dbReference>
<dbReference type="SUPFAM" id="SSF46946">
    <property type="entry name" value="S13-like H2TH domain"/>
    <property type="match status" value="1"/>
</dbReference>
<dbReference type="PROSITE" id="PS51068">
    <property type="entry name" value="FPG_CAT"/>
    <property type="match status" value="1"/>
</dbReference>
<dbReference type="PROSITE" id="PS01242">
    <property type="entry name" value="ZF_FPG_1"/>
    <property type="match status" value="1"/>
</dbReference>
<dbReference type="PROSITE" id="PS51066">
    <property type="entry name" value="ZF_FPG_2"/>
    <property type="match status" value="1"/>
</dbReference>
<proteinExistence type="inferred from homology"/>
<evidence type="ECO:0000250" key="1"/>
<evidence type="ECO:0000255" key="2">
    <source>
        <dbReference type="HAMAP-Rule" id="MF_00103"/>
    </source>
</evidence>
<name>FPG_ECODH</name>
<sequence length="269" mass="30290">MPELPEVETSRRGIEPHLVGATILHAVVRNGRLRWPVSEEIYRLSDQPVLSVQRRAKYLLLELPEGWIIIHLGMSGSLRILPEELPPEKHDHVDLVMSNGKVLRYTDPRRFGAWLWTKELEGHNVLTHLGPEPLSDDFNGEYLHQKCAKKKTAIKPWLMDNKLVVGVGNIYASESLFAAGIHPDRLASSLSLAECELLARVIKAVLLRSIEQGGTTLKDFLQSDGKPGYFAQELQVYGRKGEPCRVCGTPIVATKHAQRATFYCRQCQK</sequence>
<comment type="function">
    <text evidence="2">Involved in base excision repair of DNA damaged by oxidation or by mutagenic agents. Acts as a DNA glycosylase that recognizes and removes damaged bases. Has a preference for oxidized purines, such as 7,8-dihydro-8-oxoguanine (8-oxoG). Has AP (apurinic/apyrimidinic) lyase activity and introduces nicks in the DNA strand. Cleaves the DNA backbone by beta-delta elimination to generate a single-strand break at the site of the removed base with both 3'- and 5'-phosphates.</text>
</comment>
<comment type="catalytic activity">
    <reaction evidence="2">
        <text>Hydrolysis of DNA containing ring-opened 7-methylguanine residues, releasing 2,6-diamino-4-hydroxy-5-(N-methyl)formamidopyrimidine.</text>
        <dbReference type="EC" id="3.2.2.23"/>
    </reaction>
</comment>
<comment type="catalytic activity">
    <reaction evidence="2">
        <text>2'-deoxyribonucleotide-(2'-deoxyribose 5'-phosphate)-2'-deoxyribonucleotide-DNA = a 3'-end 2'-deoxyribonucleotide-(2,3-dehydro-2,3-deoxyribose 5'-phosphate)-DNA + a 5'-end 5'-phospho-2'-deoxyribonucleoside-DNA + H(+)</text>
        <dbReference type="Rhea" id="RHEA:66592"/>
        <dbReference type="Rhea" id="RHEA-COMP:13180"/>
        <dbReference type="Rhea" id="RHEA-COMP:16897"/>
        <dbReference type="Rhea" id="RHEA-COMP:17067"/>
        <dbReference type="ChEBI" id="CHEBI:15378"/>
        <dbReference type="ChEBI" id="CHEBI:136412"/>
        <dbReference type="ChEBI" id="CHEBI:157695"/>
        <dbReference type="ChEBI" id="CHEBI:167181"/>
        <dbReference type="EC" id="4.2.99.18"/>
    </reaction>
</comment>
<comment type="cofactor">
    <cofactor evidence="2">
        <name>Zn(2+)</name>
        <dbReference type="ChEBI" id="CHEBI:29105"/>
    </cofactor>
    <text evidence="2">Binds 1 zinc ion per subunit.</text>
</comment>
<comment type="subunit">
    <text evidence="2">Monomer.</text>
</comment>
<comment type="similarity">
    <text evidence="2">Belongs to the FPG family.</text>
</comment>
<gene>
    <name evidence="2" type="primary">mutM</name>
    <name evidence="2" type="synonym">fpg</name>
    <name type="ordered locus">ECDH10B_3817</name>
</gene>
<protein>
    <recommendedName>
        <fullName evidence="2">Formamidopyrimidine-DNA glycosylase</fullName>
        <shortName evidence="2">Fapy-DNA glycosylase</shortName>
        <ecNumber evidence="2">3.2.2.23</ecNumber>
    </recommendedName>
    <alternativeName>
        <fullName evidence="2">DNA-(apurinic or apyrimidinic site) lyase MutM</fullName>
        <shortName evidence="2">AP lyase MutM</shortName>
        <ecNumber evidence="2">4.2.99.18</ecNumber>
    </alternativeName>
</protein>
<feature type="initiator methionine" description="Removed" evidence="1">
    <location>
        <position position="1"/>
    </location>
</feature>
<feature type="chain" id="PRO_1000094043" description="Formamidopyrimidine-DNA glycosylase">
    <location>
        <begin position="2"/>
        <end position="269"/>
    </location>
</feature>
<feature type="zinc finger region" description="FPG-type" evidence="2">
    <location>
        <begin position="235"/>
        <end position="269"/>
    </location>
</feature>
<feature type="active site" description="Schiff-base intermediate with DNA" evidence="2">
    <location>
        <position position="2"/>
    </location>
</feature>
<feature type="active site" description="Proton donor" evidence="2">
    <location>
        <position position="3"/>
    </location>
</feature>
<feature type="active site" description="Proton donor; for beta-elimination activity" evidence="2">
    <location>
        <position position="57"/>
    </location>
</feature>
<feature type="active site" description="Proton donor; for delta-elimination activity" evidence="2">
    <location>
        <position position="259"/>
    </location>
</feature>
<feature type="binding site" evidence="2">
    <location>
        <position position="90"/>
    </location>
    <ligand>
        <name>DNA</name>
        <dbReference type="ChEBI" id="CHEBI:16991"/>
    </ligand>
</feature>
<feature type="binding site" evidence="2">
    <location>
        <position position="109"/>
    </location>
    <ligand>
        <name>DNA</name>
        <dbReference type="ChEBI" id="CHEBI:16991"/>
    </ligand>
</feature>
<feature type="binding site" evidence="2">
    <location>
        <position position="150"/>
    </location>
    <ligand>
        <name>DNA</name>
        <dbReference type="ChEBI" id="CHEBI:16991"/>
    </ligand>
</feature>
<keyword id="KW-0227">DNA damage</keyword>
<keyword id="KW-0234">DNA repair</keyword>
<keyword id="KW-0238">DNA-binding</keyword>
<keyword id="KW-0326">Glycosidase</keyword>
<keyword id="KW-0378">Hydrolase</keyword>
<keyword id="KW-0456">Lyase</keyword>
<keyword id="KW-0479">Metal-binding</keyword>
<keyword id="KW-0511">Multifunctional enzyme</keyword>
<keyword id="KW-0862">Zinc</keyword>
<keyword id="KW-0863">Zinc-finger</keyword>
<reference key="1">
    <citation type="journal article" date="2008" name="J. Bacteriol.">
        <title>The complete genome sequence of Escherichia coli DH10B: insights into the biology of a laboratory workhorse.</title>
        <authorList>
            <person name="Durfee T."/>
            <person name="Nelson R."/>
            <person name="Baldwin S."/>
            <person name="Plunkett G. III"/>
            <person name="Burland V."/>
            <person name="Mau B."/>
            <person name="Petrosino J.F."/>
            <person name="Qin X."/>
            <person name="Muzny D.M."/>
            <person name="Ayele M."/>
            <person name="Gibbs R.A."/>
            <person name="Csorgo B."/>
            <person name="Posfai G."/>
            <person name="Weinstock G.M."/>
            <person name="Blattner F.R."/>
        </authorList>
    </citation>
    <scope>NUCLEOTIDE SEQUENCE [LARGE SCALE GENOMIC DNA]</scope>
    <source>
        <strain>K12 / DH10B</strain>
    </source>
</reference>